<reference key="1">
    <citation type="journal article" date="2009" name="Nature">
        <title>Evolution of pathogenicity and sexual reproduction in eight Candida genomes.</title>
        <authorList>
            <person name="Butler G."/>
            <person name="Rasmussen M.D."/>
            <person name="Lin M.F."/>
            <person name="Santos M.A.S."/>
            <person name="Sakthikumar S."/>
            <person name="Munro C.A."/>
            <person name="Rheinbay E."/>
            <person name="Grabherr M."/>
            <person name="Forche A."/>
            <person name="Reedy J.L."/>
            <person name="Agrafioti I."/>
            <person name="Arnaud M.B."/>
            <person name="Bates S."/>
            <person name="Brown A.J.P."/>
            <person name="Brunke S."/>
            <person name="Costanzo M.C."/>
            <person name="Fitzpatrick D.A."/>
            <person name="de Groot P.W.J."/>
            <person name="Harris D."/>
            <person name="Hoyer L.L."/>
            <person name="Hube B."/>
            <person name="Klis F.M."/>
            <person name="Kodira C."/>
            <person name="Lennard N."/>
            <person name="Logue M.E."/>
            <person name="Martin R."/>
            <person name="Neiman A.M."/>
            <person name="Nikolaou E."/>
            <person name="Quail M.A."/>
            <person name="Quinn J."/>
            <person name="Santos M.C."/>
            <person name="Schmitzberger F.F."/>
            <person name="Sherlock G."/>
            <person name="Shah P."/>
            <person name="Silverstein K.A.T."/>
            <person name="Skrzypek M.S."/>
            <person name="Soll D."/>
            <person name="Staggs R."/>
            <person name="Stansfield I."/>
            <person name="Stumpf M.P.H."/>
            <person name="Sudbery P.E."/>
            <person name="Srikantha T."/>
            <person name="Zeng Q."/>
            <person name="Berman J."/>
            <person name="Berriman M."/>
            <person name="Heitman J."/>
            <person name="Gow N.A.R."/>
            <person name="Lorenz M.C."/>
            <person name="Birren B.W."/>
            <person name="Kellis M."/>
            <person name="Cuomo C.A."/>
        </authorList>
    </citation>
    <scope>NUCLEOTIDE SEQUENCE [LARGE SCALE GENOMIC DNA]</scope>
    <source>
        <strain>ATCC 6260 / CBS 566 / DSM 6381 / JCM 1539 / NBRC 10279 / NRRL Y-324</strain>
    </source>
</reference>
<feature type="chain" id="PRO_0000320401" description="Ribosome biogenesis protein NSA1">
    <location>
        <begin position="1"/>
        <end position="398"/>
    </location>
</feature>
<feature type="region of interest" description="Disordered" evidence="2">
    <location>
        <begin position="364"/>
        <end position="398"/>
    </location>
</feature>
<feature type="compositionally biased region" description="Acidic residues" evidence="2">
    <location>
        <begin position="364"/>
        <end position="379"/>
    </location>
</feature>
<protein>
    <recommendedName>
        <fullName>Ribosome biogenesis protein NSA1</fullName>
    </recommendedName>
</protein>
<evidence type="ECO:0000250" key="1"/>
<evidence type="ECO:0000256" key="2">
    <source>
        <dbReference type="SAM" id="MobiDB-lite"/>
    </source>
</evidence>
<evidence type="ECO:0000305" key="3"/>
<comment type="function">
    <text evidence="1">Involved in the biogenesis of the 60S ribosomal subunit.</text>
</comment>
<comment type="subunit">
    <text evidence="1">Component of the pre-66S ribosomal particle.</text>
</comment>
<comment type="subcellular location">
    <subcellularLocation>
        <location evidence="1">Nucleus</location>
        <location evidence="1">Nucleolus</location>
    </subcellularLocation>
</comment>
<comment type="similarity">
    <text evidence="3">Belongs to the NSA1 family.</text>
</comment>
<keyword id="KW-0539">Nucleus</keyword>
<keyword id="KW-1185">Reference proteome</keyword>
<keyword id="KW-0690">Ribosome biogenesis</keyword>
<keyword id="KW-0698">rRNA processing</keyword>
<gene>
    <name type="primary">NSA1</name>
    <name type="ORF">PGUG_03725</name>
</gene>
<accession>A5DKC4</accession>
<sequence length="398" mass="44613">MRLIVTCDDSGSAQGGDFVLQEQIPRNRTSPSPISITQVFVEPKASPASRILYSTLYKERYAICCRLDASVSVYDLEDDEKKLVCHREYVELKGCKPVSLHVFSEFDALVMGLDSGKAALVGFHKNTLEKECQIVDLPGGKPIEAFEACPSQPGVFAYGGKENDLRIVKMFEVGKKVKLLESVEVLFAAKNVKNDHLDLRVPIWITKIRFISSKNSYKLITATRYGQLRIYDTNHGRKPAHDYQVCTNPIITLNFAGSNSDEVIITDNRNMVARHSLVSIDKKAFKTNSATVGDIIKPVPRLLGKYQEGGNTGAIFGVSCFKDTFVATGGLDRYLRVYDLETREMVSKVYMGSQIADILFLEGEEEEESEEEVDEEEENNALWDELESNRPAKKQKQT</sequence>
<dbReference type="EMBL" id="CH408158">
    <property type="protein sequence ID" value="EDK39627.2"/>
    <property type="molecule type" value="Genomic_DNA"/>
</dbReference>
<dbReference type="RefSeq" id="XP_001484344.1">
    <property type="nucleotide sequence ID" value="XM_001484294.1"/>
</dbReference>
<dbReference type="SMR" id="A5DKC4"/>
<dbReference type="STRING" id="294746.A5DKC4"/>
<dbReference type="GeneID" id="5126180"/>
<dbReference type="KEGG" id="pgu:PGUG_03725"/>
<dbReference type="eggNOG" id="KOG3881">
    <property type="taxonomic scope" value="Eukaryota"/>
</dbReference>
<dbReference type="HOGENOM" id="CLU_033769_4_0_1"/>
<dbReference type="InParanoid" id="A5DKC4"/>
<dbReference type="OMA" id="KNVCRMR"/>
<dbReference type="OrthoDB" id="18388at2759"/>
<dbReference type="Proteomes" id="UP000001997">
    <property type="component" value="Unassembled WGS sequence"/>
</dbReference>
<dbReference type="GO" id="GO:0005730">
    <property type="term" value="C:nucleolus"/>
    <property type="evidence" value="ECO:0007669"/>
    <property type="project" value="UniProtKB-SubCell"/>
</dbReference>
<dbReference type="GO" id="GO:0030687">
    <property type="term" value="C:preribosome, large subunit precursor"/>
    <property type="evidence" value="ECO:0007669"/>
    <property type="project" value="TreeGrafter"/>
</dbReference>
<dbReference type="GO" id="GO:0042273">
    <property type="term" value="P:ribosomal large subunit biogenesis"/>
    <property type="evidence" value="ECO:0007669"/>
    <property type="project" value="InterPro"/>
</dbReference>
<dbReference type="GO" id="GO:0006364">
    <property type="term" value="P:rRNA processing"/>
    <property type="evidence" value="ECO:0007669"/>
    <property type="project" value="UniProtKB-KW"/>
</dbReference>
<dbReference type="CDD" id="cd22858">
    <property type="entry name" value="Nsa1"/>
    <property type="match status" value="1"/>
</dbReference>
<dbReference type="Gene3D" id="2.130.10.10">
    <property type="entry name" value="YVTN repeat-like/Quinoprotein amine dehydrogenase"/>
    <property type="match status" value="1"/>
</dbReference>
<dbReference type="InterPro" id="IPR015943">
    <property type="entry name" value="WD40/YVTN_repeat-like_dom_sf"/>
</dbReference>
<dbReference type="InterPro" id="IPR036322">
    <property type="entry name" value="WD40_repeat_dom_sf"/>
</dbReference>
<dbReference type="InterPro" id="IPR037379">
    <property type="entry name" value="WDR74/Nsa1"/>
</dbReference>
<dbReference type="PANTHER" id="PTHR16038">
    <property type="entry name" value="NOP SEVEN ASSOCIATED PROTEIN 1"/>
    <property type="match status" value="1"/>
</dbReference>
<dbReference type="PANTHER" id="PTHR16038:SF4">
    <property type="entry name" value="WD REPEAT-CONTAINING PROTEIN 74"/>
    <property type="match status" value="1"/>
</dbReference>
<dbReference type="SUPFAM" id="SSF50978">
    <property type="entry name" value="WD40 repeat-like"/>
    <property type="match status" value="1"/>
</dbReference>
<name>NSA1_PICGU</name>
<proteinExistence type="inferred from homology"/>
<organism>
    <name type="scientific">Meyerozyma guilliermondii (strain ATCC 6260 / CBS 566 / DSM 6381 / JCM 1539 / NBRC 10279 / NRRL Y-324)</name>
    <name type="common">Yeast</name>
    <name type="synonym">Candida guilliermondii</name>
    <dbReference type="NCBI Taxonomy" id="294746"/>
    <lineage>
        <taxon>Eukaryota</taxon>
        <taxon>Fungi</taxon>
        <taxon>Dikarya</taxon>
        <taxon>Ascomycota</taxon>
        <taxon>Saccharomycotina</taxon>
        <taxon>Pichiomycetes</taxon>
        <taxon>Debaryomycetaceae</taxon>
        <taxon>Meyerozyma</taxon>
    </lineage>
</organism>